<reference key="1">
    <citation type="journal article" date="1997" name="DNA Res.">
        <title>Structural analysis of Arabidopsis thaliana chromosome 5. I. Sequence features of the 1.6 Mb regions covered by twenty physically assigned P1 clones.</title>
        <authorList>
            <person name="Sato S."/>
            <person name="Kotani H."/>
            <person name="Nakamura Y."/>
            <person name="Kaneko T."/>
            <person name="Asamizu E."/>
            <person name="Fukami M."/>
            <person name="Miyajima N."/>
            <person name="Tabata S."/>
        </authorList>
    </citation>
    <scope>NUCLEOTIDE SEQUENCE [LARGE SCALE GENOMIC DNA]</scope>
    <source>
        <strain>cv. Columbia</strain>
    </source>
</reference>
<reference key="2">
    <citation type="journal article" date="2017" name="Plant J.">
        <title>Araport11: a complete reannotation of the Arabidopsis thaliana reference genome.</title>
        <authorList>
            <person name="Cheng C.Y."/>
            <person name="Krishnakumar V."/>
            <person name="Chan A.P."/>
            <person name="Thibaud-Nissen F."/>
            <person name="Schobel S."/>
            <person name="Town C.D."/>
        </authorList>
    </citation>
    <scope>GENOME REANNOTATION</scope>
    <source>
        <strain>cv. Columbia</strain>
    </source>
</reference>
<reference key="3">
    <citation type="journal article" date="2003" name="Science">
        <title>Empirical analysis of transcriptional activity in the Arabidopsis genome.</title>
        <authorList>
            <person name="Yamada K."/>
            <person name="Lim J."/>
            <person name="Dale J.M."/>
            <person name="Chen H."/>
            <person name="Shinn P."/>
            <person name="Palm C.J."/>
            <person name="Southwick A.M."/>
            <person name="Wu H.C."/>
            <person name="Kim C.J."/>
            <person name="Nguyen M."/>
            <person name="Pham P.K."/>
            <person name="Cheuk R.F."/>
            <person name="Karlin-Newmann G."/>
            <person name="Liu S.X."/>
            <person name="Lam B."/>
            <person name="Sakano H."/>
            <person name="Wu T."/>
            <person name="Yu G."/>
            <person name="Miranda M."/>
            <person name="Quach H.L."/>
            <person name="Tripp M."/>
            <person name="Chang C.H."/>
            <person name="Lee J.M."/>
            <person name="Toriumi M.J."/>
            <person name="Chan M.M."/>
            <person name="Tang C.C."/>
            <person name="Onodera C.S."/>
            <person name="Deng J.M."/>
            <person name="Akiyama K."/>
            <person name="Ansari Y."/>
            <person name="Arakawa T."/>
            <person name="Banh J."/>
            <person name="Banno F."/>
            <person name="Bowser L."/>
            <person name="Brooks S.Y."/>
            <person name="Carninci P."/>
            <person name="Chao Q."/>
            <person name="Choy N."/>
            <person name="Enju A."/>
            <person name="Goldsmith A.D."/>
            <person name="Gurjal M."/>
            <person name="Hansen N.F."/>
            <person name="Hayashizaki Y."/>
            <person name="Johnson-Hopson C."/>
            <person name="Hsuan V.W."/>
            <person name="Iida K."/>
            <person name="Karnes M."/>
            <person name="Khan S."/>
            <person name="Koesema E."/>
            <person name="Ishida J."/>
            <person name="Jiang P.X."/>
            <person name="Jones T."/>
            <person name="Kawai J."/>
            <person name="Kamiya A."/>
            <person name="Meyers C."/>
            <person name="Nakajima M."/>
            <person name="Narusaka M."/>
            <person name="Seki M."/>
            <person name="Sakurai T."/>
            <person name="Satou M."/>
            <person name="Tamse R."/>
            <person name="Vaysberg M."/>
            <person name="Wallender E.K."/>
            <person name="Wong C."/>
            <person name="Yamamura Y."/>
            <person name="Yuan S."/>
            <person name="Shinozaki K."/>
            <person name="Davis R.W."/>
            <person name="Theologis A."/>
            <person name="Ecker J.R."/>
        </authorList>
    </citation>
    <scope>NUCLEOTIDE SEQUENCE [LARGE SCALE MRNA]</scope>
    <source>
        <strain>cv. Columbia</strain>
    </source>
</reference>
<reference key="4">
    <citation type="submission" date="2005-02" db="EMBL/GenBank/DDBJ databases">
        <title>Arabidopsis ORF clones.</title>
        <authorList>
            <person name="Cheuk R.F."/>
            <person name="Chen H."/>
            <person name="Kim C.J."/>
            <person name="Shinn P."/>
            <person name="Ecker J.R."/>
        </authorList>
    </citation>
    <scope>NUCLEOTIDE SEQUENCE [LARGE SCALE MRNA]</scope>
    <source>
        <strain>cv. Columbia</strain>
    </source>
</reference>
<reference key="5">
    <citation type="journal article" date="2004" name="Carbohydr. Res.">
        <title>Pectin methylesterases: sequence-structural features and phylogenetic relationships.</title>
        <authorList>
            <person name="Markovic O."/>
            <person name="Janecek S."/>
        </authorList>
    </citation>
    <scope>GENE FAMILY</scope>
    <scope>NOMENCLATURE</scope>
</reference>
<name>PME46_ARATH</name>
<protein>
    <recommendedName>
        <fullName>Probable pectinesterase/pectinesterase inhibitor 46</fullName>
    </recommendedName>
    <domain>
        <recommendedName>
            <fullName>Pectinesterase inhibitor 46</fullName>
        </recommendedName>
        <alternativeName>
            <fullName>Pectin methylesterase inhibitor 46</fullName>
        </alternativeName>
    </domain>
    <domain>
        <recommendedName>
            <fullName>Pectinesterase 46</fullName>
            <shortName>PE 46</shortName>
            <ecNumber>3.1.1.11</ecNumber>
        </recommendedName>
        <alternativeName>
            <fullName>Pectin methylesterase 46</fullName>
            <shortName>AtPME46</shortName>
        </alternativeName>
    </domain>
</protein>
<dbReference type="EC" id="3.1.1.11"/>
<dbReference type="EMBL" id="AB005245">
    <property type="protein sequence ID" value="BAB11518.1"/>
    <property type="molecule type" value="Genomic_DNA"/>
</dbReference>
<dbReference type="EMBL" id="CP002688">
    <property type="protein sequence ID" value="AED90809.1"/>
    <property type="molecule type" value="Genomic_DNA"/>
</dbReference>
<dbReference type="EMBL" id="BT004297">
    <property type="protein sequence ID" value="AAO42295.1"/>
    <property type="molecule type" value="mRNA"/>
</dbReference>
<dbReference type="EMBL" id="BT020587">
    <property type="protein sequence ID" value="AAW80860.1"/>
    <property type="molecule type" value="mRNA"/>
</dbReference>
<dbReference type="RefSeq" id="NP_196115.1">
    <property type="nucleotide sequence ID" value="NM_120578.5"/>
</dbReference>
<dbReference type="SMR" id="Q9FF78"/>
<dbReference type="FunCoup" id="Q9FF78">
    <property type="interactions" value="135"/>
</dbReference>
<dbReference type="STRING" id="3702.Q9FF78"/>
<dbReference type="GlyCosmos" id="Q9FF78">
    <property type="glycosylation" value="6 sites, No reported glycans"/>
</dbReference>
<dbReference type="GlyGen" id="Q9FF78">
    <property type="glycosylation" value="6 sites"/>
</dbReference>
<dbReference type="PaxDb" id="3702-AT5G04960.1"/>
<dbReference type="ProteomicsDB" id="234880"/>
<dbReference type="EnsemblPlants" id="AT5G04960.1">
    <property type="protein sequence ID" value="AT5G04960.1"/>
    <property type="gene ID" value="AT5G04960"/>
</dbReference>
<dbReference type="GeneID" id="830378"/>
<dbReference type="Gramene" id="AT5G04960.1">
    <property type="protein sequence ID" value="AT5G04960.1"/>
    <property type="gene ID" value="AT5G04960"/>
</dbReference>
<dbReference type="KEGG" id="ath:AT5G04960"/>
<dbReference type="Araport" id="AT5G04960"/>
<dbReference type="TAIR" id="AT5G04960">
    <property type="gene designation" value="PME46"/>
</dbReference>
<dbReference type="eggNOG" id="ENOG502QVDS">
    <property type="taxonomic scope" value="Eukaryota"/>
</dbReference>
<dbReference type="HOGENOM" id="CLU_012243_9_1_1"/>
<dbReference type="InParanoid" id="Q9FF78"/>
<dbReference type="OMA" id="YSEFQNF"/>
<dbReference type="OrthoDB" id="2019149at2759"/>
<dbReference type="PhylomeDB" id="Q9FF78"/>
<dbReference type="BioCyc" id="ARA:AT5G04960-MONOMER"/>
<dbReference type="UniPathway" id="UPA00545">
    <property type="reaction ID" value="UER00823"/>
</dbReference>
<dbReference type="PRO" id="PR:Q9FF78"/>
<dbReference type="Proteomes" id="UP000006548">
    <property type="component" value="Chromosome 5"/>
</dbReference>
<dbReference type="ExpressionAtlas" id="Q9FF78">
    <property type="expression patterns" value="baseline and differential"/>
</dbReference>
<dbReference type="GO" id="GO:0016020">
    <property type="term" value="C:membrane"/>
    <property type="evidence" value="ECO:0007669"/>
    <property type="project" value="UniProtKB-SubCell"/>
</dbReference>
<dbReference type="GO" id="GO:0030599">
    <property type="term" value="F:pectinesterase activity"/>
    <property type="evidence" value="ECO:0007669"/>
    <property type="project" value="UniProtKB-EC"/>
</dbReference>
<dbReference type="GO" id="GO:0046910">
    <property type="term" value="F:pectinesterase inhibitor activity"/>
    <property type="evidence" value="ECO:0000315"/>
    <property type="project" value="TAIR"/>
</dbReference>
<dbReference type="GO" id="GO:0042545">
    <property type="term" value="P:cell wall modification"/>
    <property type="evidence" value="ECO:0007669"/>
    <property type="project" value="InterPro"/>
</dbReference>
<dbReference type="GO" id="GO:0045490">
    <property type="term" value="P:pectin catabolic process"/>
    <property type="evidence" value="ECO:0007669"/>
    <property type="project" value="UniProtKB-UniPathway"/>
</dbReference>
<dbReference type="GO" id="GO:1902066">
    <property type="term" value="P:regulation of cell wall pectin metabolic process"/>
    <property type="evidence" value="ECO:0000315"/>
    <property type="project" value="TAIR"/>
</dbReference>
<dbReference type="CDD" id="cd15798">
    <property type="entry name" value="PMEI-like_3"/>
    <property type="match status" value="1"/>
</dbReference>
<dbReference type="FunFam" id="1.20.140.40:FF:000001">
    <property type="entry name" value="Pectinesterase"/>
    <property type="match status" value="1"/>
</dbReference>
<dbReference type="FunFam" id="2.160.20.10:FF:000001">
    <property type="entry name" value="Pectinesterase"/>
    <property type="match status" value="1"/>
</dbReference>
<dbReference type="Gene3D" id="1.20.140.40">
    <property type="entry name" value="Invertase/pectin methylesterase inhibitor family protein"/>
    <property type="match status" value="1"/>
</dbReference>
<dbReference type="Gene3D" id="2.160.20.10">
    <property type="entry name" value="Single-stranded right-handed beta-helix, Pectin lyase-like"/>
    <property type="match status" value="1"/>
</dbReference>
<dbReference type="InterPro" id="IPR035513">
    <property type="entry name" value="Invertase/methylesterase_inhib"/>
</dbReference>
<dbReference type="InterPro" id="IPR012334">
    <property type="entry name" value="Pectin_lyas_fold"/>
</dbReference>
<dbReference type="InterPro" id="IPR011050">
    <property type="entry name" value="Pectin_lyase_fold/virulence"/>
</dbReference>
<dbReference type="InterPro" id="IPR033131">
    <property type="entry name" value="Pectinesterase_Asp_AS"/>
</dbReference>
<dbReference type="InterPro" id="IPR000070">
    <property type="entry name" value="Pectinesterase_cat"/>
</dbReference>
<dbReference type="InterPro" id="IPR006501">
    <property type="entry name" value="Pectinesterase_inhib_dom"/>
</dbReference>
<dbReference type="NCBIfam" id="TIGR01614">
    <property type="entry name" value="PME_inhib"/>
    <property type="match status" value="1"/>
</dbReference>
<dbReference type="PANTHER" id="PTHR31707">
    <property type="entry name" value="PECTINESTERASE"/>
    <property type="match status" value="1"/>
</dbReference>
<dbReference type="Pfam" id="PF01095">
    <property type="entry name" value="Pectinesterase"/>
    <property type="match status" value="1"/>
</dbReference>
<dbReference type="Pfam" id="PF04043">
    <property type="entry name" value="PMEI"/>
    <property type="match status" value="1"/>
</dbReference>
<dbReference type="SMART" id="SM00856">
    <property type="entry name" value="PMEI"/>
    <property type="match status" value="1"/>
</dbReference>
<dbReference type="SUPFAM" id="SSF51126">
    <property type="entry name" value="Pectin lyase-like"/>
    <property type="match status" value="1"/>
</dbReference>
<dbReference type="SUPFAM" id="SSF101148">
    <property type="entry name" value="Plant invertase/pectin methylesterase inhibitor"/>
    <property type="match status" value="1"/>
</dbReference>
<dbReference type="PROSITE" id="PS00503">
    <property type="entry name" value="PECTINESTERASE_2"/>
    <property type="match status" value="1"/>
</dbReference>
<comment type="function">
    <text evidence="1">Acts in the modification of cell walls via demethylesterification of cell wall pectin.</text>
</comment>
<comment type="catalytic activity">
    <reaction>
        <text>[(1-&gt;4)-alpha-D-galacturonosyl methyl ester](n) + n H2O = [(1-&gt;4)-alpha-D-galacturonosyl](n) + n methanol + n H(+)</text>
        <dbReference type="Rhea" id="RHEA:22380"/>
        <dbReference type="Rhea" id="RHEA-COMP:14570"/>
        <dbReference type="Rhea" id="RHEA-COMP:14573"/>
        <dbReference type="ChEBI" id="CHEBI:15377"/>
        <dbReference type="ChEBI" id="CHEBI:15378"/>
        <dbReference type="ChEBI" id="CHEBI:17790"/>
        <dbReference type="ChEBI" id="CHEBI:140522"/>
        <dbReference type="ChEBI" id="CHEBI:140523"/>
        <dbReference type="EC" id="3.1.1.11"/>
    </reaction>
</comment>
<comment type="pathway">
    <text>Glycan metabolism; pectin degradation; 2-dehydro-3-deoxy-D-gluconate from pectin: step 1/5.</text>
</comment>
<comment type="subcellular location">
    <subcellularLocation>
        <location evidence="4">Membrane</location>
        <topology evidence="4">Single-pass membrane protein</topology>
    </subcellularLocation>
</comment>
<comment type="miscellaneous">
    <text>The PMEI region may act as an autoinhibitory domain and prevent untimely PME activity during transport.</text>
</comment>
<comment type="similarity">
    <text evidence="4">In the N-terminal section; belongs to the PMEI family.</text>
</comment>
<comment type="similarity">
    <text evidence="4">In the C-terminal section; belongs to the pectinesterase family.</text>
</comment>
<gene>
    <name type="primary">PME46</name>
    <name type="synonym">ARATH46</name>
    <name type="ordered locus">At5g04960</name>
    <name type="ORF">MUG13.18</name>
</gene>
<accession>Q9FF78</accession>
<accession>Q84W31</accession>
<evidence type="ECO:0000250" key="1"/>
<evidence type="ECO:0000255" key="2"/>
<evidence type="ECO:0000255" key="3">
    <source>
        <dbReference type="PROSITE-ProRule" id="PRU10040"/>
    </source>
</evidence>
<evidence type="ECO:0000305" key="4"/>
<feature type="chain" id="PRO_0000370188" description="Probable pectinesterase/pectinesterase inhibitor 46">
    <location>
        <begin position="1"/>
        <end position="564"/>
    </location>
</feature>
<feature type="transmembrane region" description="Helical" evidence="2">
    <location>
        <begin position="25"/>
        <end position="45"/>
    </location>
</feature>
<feature type="region of interest" description="Pectinesterase inhibitor 46">
    <location>
        <begin position="62"/>
        <end position="207"/>
    </location>
</feature>
<feature type="region of interest" description="Pectinesterase 46">
    <location>
        <begin position="257"/>
        <end position="550"/>
    </location>
</feature>
<feature type="active site" description="Proton donor; for pectinesterase activity" evidence="3">
    <location>
        <position position="385"/>
    </location>
</feature>
<feature type="active site" description="Nucleophile; for pectinesterase activity" evidence="3">
    <location>
        <position position="406"/>
    </location>
</feature>
<feature type="binding site" evidence="1">
    <location>
        <position position="332"/>
    </location>
    <ligand>
        <name>substrate</name>
        <note>for pectinesterase activity</note>
    </ligand>
</feature>
<feature type="binding site" evidence="1">
    <location>
        <position position="362"/>
    </location>
    <ligand>
        <name>substrate</name>
        <note>for pectinesterase activity</note>
    </ligand>
</feature>
<feature type="binding site" evidence="1">
    <location>
        <position position="470"/>
    </location>
    <ligand>
        <name>substrate</name>
        <note>for pectinesterase activity</note>
    </ligand>
</feature>
<feature type="binding site" evidence="1">
    <location>
        <position position="472"/>
    </location>
    <ligand>
        <name>substrate</name>
        <note>for pectinesterase activity</note>
    </ligand>
</feature>
<feature type="site" description="Transition state stabilizer" evidence="1">
    <location>
        <position position="384"/>
    </location>
</feature>
<feature type="glycosylation site" description="N-linked (GlcNAc...) asparagine" evidence="2">
    <location>
        <position position="90"/>
    </location>
</feature>
<feature type="glycosylation site" description="N-linked (GlcNAc...) asparagine" evidence="2">
    <location>
        <position position="126"/>
    </location>
</feature>
<feature type="glycosylation site" description="N-linked (GlcNAc...) asparagine" evidence="2">
    <location>
        <position position="147"/>
    </location>
</feature>
<feature type="glycosylation site" description="N-linked (GlcNAc...) asparagine" evidence="2">
    <location>
        <position position="196"/>
    </location>
</feature>
<feature type="glycosylation site" description="N-linked (GlcNAc...) asparagine" evidence="2">
    <location>
        <position position="452"/>
    </location>
</feature>
<feature type="glycosylation site" description="N-linked (GlcNAc...) asparagine" evidence="2">
    <location>
        <position position="460"/>
    </location>
</feature>
<feature type="disulfide bond" evidence="1">
    <location>
        <begin position="399"/>
        <end position="419"/>
    </location>
</feature>
<feature type="sequence conflict" description="In Ref. 3; AAO42295." evidence="4" ref="3">
    <original>I</original>
    <variation>T</variation>
    <location>
        <position position="464"/>
    </location>
</feature>
<feature type="sequence conflict" description="In Ref. 3; AAO42295." evidence="4" ref="3">
    <original>G</original>
    <variation>D</variation>
    <location>
        <position position="469"/>
    </location>
</feature>
<keyword id="KW-0063">Aspartyl esterase</keyword>
<keyword id="KW-1015">Disulfide bond</keyword>
<keyword id="KW-0325">Glycoprotein</keyword>
<keyword id="KW-0378">Hydrolase</keyword>
<keyword id="KW-0472">Membrane</keyword>
<keyword id="KW-1185">Reference proteome</keyword>
<keyword id="KW-0812">Transmembrane</keyword>
<keyword id="KW-1133">Transmembrane helix</keyword>
<sequence>MSSYGRLDEHEQAKLEASRKTKKRIAIIAISSIVLVCIVVGAVVGTTARDNSKKPPTENNGEPISVSVKALCDVTLHKEKCFETLGSAPNASRSSPEELFKYAVKVTITELSKVLDGFSNGEHMDNATSAAMGACVELIGLAVDQLNETMTSSLKNFDDLRTWLSSVGTYQETCMDALVEANKPSLTTFGENHLKNSTEMTSNALAIITWLGKIADTVKFRRRRLLETGNAKVVVADLPMMEGRRLLESGDLKKKATIVVAKDGSGKYRTIGEALAEVEEKNEKPTIIYVKKGVYLENVRVEKTKWNVVMVGDGQSKTIVSAGLNFIDGTPTFETATFAVFGKGFMARDMGFINTAGPAKHQAVALMVSADLSVFYKCTMDAFQDTMYAHAQRQFYRDCVILGTVDFIFGNAAVVFQKCEILPRRPMKGQQNTITAQGRKDPNQNTGISIHNCTIKPLDNLTDIQTFLGRPWKDFSTTVIMKSFMDKFINPKGWLPWTGDTAPDTIFYAEYLNSGPGASTKNRVKWQGLKTSLTKKEANKFTVKPFIDGNNWLPATKVPFNSDF</sequence>
<organism>
    <name type="scientific">Arabidopsis thaliana</name>
    <name type="common">Mouse-ear cress</name>
    <dbReference type="NCBI Taxonomy" id="3702"/>
    <lineage>
        <taxon>Eukaryota</taxon>
        <taxon>Viridiplantae</taxon>
        <taxon>Streptophyta</taxon>
        <taxon>Embryophyta</taxon>
        <taxon>Tracheophyta</taxon>
        <taxon>Spermatophyta</taxon>
        <taxon>Magnoliopsida</taxon>
        <taxon>eudicotyledons</taxon>
        <taxon>Gunneridae</taxon>
        <taxon>Pentapetalae</taxon>
        <taxon>rosids</taxon>
        <taxon>malvids</taxon>
        <taxon>Brassicales</taxon>
        <taxon>Brassicaceae</taxon>
        <taxon>Camelineae</taxon>
        <taxon>Arabidopsis</taxon>
    </lineage>
</organism>
<proteinExistence type="evidence at transcript level"/>